<protein>
    <recommendedName>
        <fullName evidence="1">Ferrochelatase</fullName>
        <ecNumber evidence="1">4.98.1.1</ecNumber>
    </recommendedName>
    <alternativeName>
        <fullName evidence="1">Heme synthase</fullName>
    </alternativeName>
    <alternativeName>
        <fullName evidence="1">Protoheme ferro-lyase</fullName>
    </alternativeName>
</protein>
<sequence>MNLINEKLDNLENNATKSPKEAVVLLNMGGPNSLYEVGVFLKNMFDDPFILTIKNNFMRKMVGKMIVNSRIEKSKKIYEKLGGKSPLTPITFALTERLNKLDPSRFYTYAMRYTPPYASMVLQDLALKEIESLVFFSMYPQYSSTTTLSSFNDAFNALKSLETFRPKVRVIERFYADKKLNEIILNTILNTLNNRKSQDFVLIFSVHGLPKSVIDAGDTYQQECEHHVSLLKELMQQKNIPFKEVLLSYQSKLGPMKWLEPSTEELIEKHRKSHIIIYPLAFTIDNSETLYELDMQYRLMAERLAIKEYLVCPCLNDSIEFAKFIIGLVKNLKSE</sequence>
<reference key="1">
    <citation type="journal article" date="2006" name="Proc. Natl. Acad. Sci. U.S.A.">
        <title>The complete genome sequence of a chronic atrophic gastritis Helicobacter pylori strain: evolution during disease progression.</title>
        <authorList>
            <person name="Oh J.D."/>
            <person name="Kling-Baeckhed H."/>
            <person name="Giannakis M."/>
            <person name="Xu J."/>
            <person name="Fulton R.S."/>
            <person name="Fulton L.A."/>
            <person name="Cordum H.S."/>
            <person name="Wang C."/>
            <person name="Elliott G."/>
            <person name="Edwards J."/>
            <person name="Mardis E.R."/>
            <person name="Engstrand L.G."/>
            <person name="Gordon J.I."/>
        </authorList>
    </citation>
    <scope>NUCLEOTIDE SEQUENCE [LARGE SCALE GENOMIC DNA]</scope>
    <source>
        <strain>HPAG1</strain>
    </source>
</reference>
<dbReference type="EC" id="4.98.1.1" evidence="1"/>
<dbReference type="EMBL" id="CP000241">
    <property type="protein sequence ID" value="ABF85083.1"/>
    <property type="molecule type" value="Genomic_DNA"/>
</dbReference>
<dbReference type="RefSeq" id="WP_001049017.1">
    <property type="nucleotide sequence ID" value="NC_008086.1"/>
</dbReference>
<dbReference type="SMR" id="Q1CSI9"/>
<dbReference type="KEGG" id="hpa:HPAG1_1016"/>
<dbReference type="HOGENOM" id="CLU_018884_4_1_7"/>
<dbReference type="UniPathway" id="UPA00252">
    <property type="reaction ID" value="UER00325"/>
</dbReference>
<dbReference type="GO" id="GO:0005737">
    <property type="term" value="C:cytoplasm"/>
    <property type="evidence" value="ECO:0007669"/>
    <property type="project" value="UniProtKB-SubCell"/>
</dbReference>
<dbReference type="GO" id="GO:0004325">
    <property type="term" value="F:ferrochelatase activity"/>
    <property type="evidence" value="ECO:0007669"/>
    <property type="project" value="UniProtKB-UniRule"/>
</dbReference>
<dbReference type="GO" id="GO:0046872">
    <property type="term" value="F:metal ion binding"/>
    <property type="evidence" value="ECO:0007669"/>
    <property type="project" value="UniProtKB-KW"/>
</dbReference>
<dbReference type="GO" id="GO:0006783">
    <property type="term" value="P:heme biosynthetic process"/>
    <property type="evidence" value="ECO:0007669"/>
    <property type="project" value="UniProtKB-UniRule"/>
</dbReference>
<dbReference type="CDD" id="cd00419">
    <property type="entry name" value="Ferrochelatase_C"/>
    <property type="match status" value="1"/>
</dbReference>
<dbReference type="CDD" id="cd03411">
    <property type="entry name" value="Ferrochelatase_N"/>
    <property type="match status" value="1"/>
</dbReference>
<dbReference type="FunFam" id="3.40.50.1400:FF:000015">
    <property type="entry name" value="Ferrochelatase"/>
    <property type="match status" value="1"/>
</dbReference>
<dbReference type="Gene3D" id="3.40.50.1400">
    <property type="match status" value="2"/>
</dbReference>
<dbReference type="HAMAP" id="MF_00323">
    <property type="entry name" value="Ferrochelatase"/>
    <property type="match status" value="1"/>
</dbReference>
<dbReference type="InterPro" id="IPR001015">
    <property type="entry name" value="Ferrochelatase"/>
</dbReference>
<dbReference type="InterPro" id="IPR019772">
    <property type="entry name" value="Ferrochelatase_AS"/>
</dbReference>
<dbReference type="InterPro" id="IPR033644">
    <property type="entry name" value="Ferrochelatase_C"/>
</dbReference>
<dbReference type="InterPro" id="IPR033659">
    <property type="entry name" value="Ferrochelatase_N"/>
</dbReference>
<dbReference type="NCBIfam" id="TIGR00109">
    <property type="entry name" value="hemH"/>
    <property type="match status" value="1"/>
</dbReference>
<dbReference type="PANTHER" id="PTHR11108">
    <property type="entry name" value="FERROCHELATASE"/>
    <property type="match status" value="1"/>
</dbReference>
<dbReference type="PANTHER" id="PTHR11108:SF1">
    <property type="entry name" value="FERROCHELATASE, MITOCHONDRIAL"/>
    <property type="match status" value="1"/>
</dbReference>
<dbReference type="Pfam" id="PF00762">
    <property type="entry name" value="Ferrochelatase"/>
    <property type="match status" value="1"/>
</dbReference>
<dbReference type="SUPFAM" id="SSF53800">
    <property type="entry name" value="Chelatase"/>
    <property type="match status" value="1"/>
</dbReference>
<dbReference type="PROSITE" id="PS00534">
    <property type="entry name" value="FERROCHELATASE"/>
    <property type="match status" value="1"/>
</dbReference>
<proteinExistence type="inferred from homology"/>
<gene>
    <name evidence="1" type="primary">hemH</name>
    <name type="ordered locus">HPAG1_1016</name>
</gene>
<keyword id="KW-0963">Cytoplasm</keyword>
<keyword id="KW-0350">Heme biosynthesis</keyword>
<keyword id="KW-0408">Iron</keyword>
<keyword id="KW-0456">Lyase</keyword>
<keyword id="KW-0479">Metal-binding</keyword>
<keyword id="KW-0627">Porphyrin biosynthesis</keyword>
<feature type="chain" id="PRO_1000019310" description="Ferrochelatase">
    <location>
        <begin position="1"/>
        <end position="335"/>
    </location>
</feature>
<feature type="binding site" evidence="1">
    <location>
        <position position="207"/>
    </location>
    <ligand>
        <name>Fe cation</name>
        <dbReference type="ChEBI" id="CHEBI:24875"/>
    </ligand>
</feature>
<feature type="binding site" evidence="1">
    <location>
        <position position="288"/>
    </location>
    <ligand>
        <name>Fe cation</name>
        <dbReference type="ChEBI" id="CHEBI:24875"/>
    </ligand>
</feature>
<accession>Q1CSI9</accession>
<comment type="function">
    <text evidence="1">Catalyzes the ferrous insertion into protoporphyrin IX.</text>
</comment>
<comment type="catalytic activity">
    <reaction evidence="1">
        <text>heme b + 2 H(+) = protoporphyrin IX + Fe(2+)</text>
        <dbReference type="Rhea" id="RHEA:22584"/>
        <dbReference type="ChEBI" id="CHEBI:15378"/>
        <dbReference type="ChEBI" id="CHEBI:29033"/>
        <dbReference type="ChEBI" id="CHEBI:57306"/>
        <dbReference type="ChEBI" id="CHEBI:60344"/>
        <dbReference type="EC" id="4.98.1.1"/>
    </reaction>
</comment>
<comment type="pathway">
    <text evidence="1">Porphyrin-containing compound metabolism; protoheme biosynthesis; protoheme from protoporphyrin-IX: step 1/1.</text>
</comment>
<comment type="subcellular location">
    <subcellularLocation>
        <location evidence="1">Cytoplasm</location>
    </subcellularLocation>
</comment>
<comment type="similarity">
    <text evidence="1">Belongs to the ferrochelatase family.</text>
</comment>
<name>HEMH_HELPH</name>
<evidence type="ECO:0000255" key="1">
    <source>
        <dbReference type="HAMAP-Rule" id="MF_00323"/>
    </source>
</evidence>
<organism>
    <name type="scientific">Helicobacter pylori (strain HPAG1)</name>
    <dbReference type="NCBI Taxonomy" id="357544"/>
    <lineage>
        <taxon>Bacteria</taxon>
        <taxon>Pseudomonadati</taxon>
        <taxon>Campylobacterota</taxon>
        <taxon>Epsilonproteobacteria</taxon>
        <taxon>Campylobacterales</taxon>
        <taxon>Helicobacteraceae</taxon>
        <taxon>Helicobacter</taxon>
    </lineage>
</organism>